<reference evidence="14" key="1">
    <citation type="journal article" date="2000" name="Science">
        <title>The genome sequence of Drosophila melanogaster.</title>
        <authorList>
            <person name="Adams M.D."/>
            <person name="Celniker S.E."/>
            <person name="Holt R.A."/>
            <person name="Evans C.A."/>
            <person name="Gocayne J.D."/>
            <person name="Amanatides P.G."/>
            <person name="Scherer S.E."/>
            <person name="Li P.W."/>
            <person name="Hoskins R.A."/>
            <person name="Galle R.F."/>
            <person name="George R.A."/>
            <person name="Lewis S.E."/>
            <person name="Richards S."/>
            <person name="Ashburner M."/>
            <person name="Henderson S.N."/>
            <person name="Sutton G.G."/>
            <person name="Wortman J.R."/>
            <person name="Yandell M.D."/>
            <person name="Zhang Q."/>
            <person name="Chen L.X."/>
            <person name="Brandon R.C."/>
            <person name="Rogers Y.-H.C."/>
            <person name="Blazej R.G."/>
            <person name="Champe M."/>
            <person name="Pfeiffer B.D."/>
            <person name="Wan K.H."/>
            <person name="Doyle C."/>
            <person name="Baxter E.G."/>
            <person name="Helt G."/>
            <person name="Nelson C.R."/>
            <person name="Miklos G.L.G."/>
            <person name="Abril J.F."/>
            <person name="Agbayani A."/>
            <person name="An H.-J."/>
            <person name="Andrews-Pfannkoch C."/>
            <person name="Baldwin D."/>
            <person name="Ballew R.M."/>
            <person name="Basu A."/>
            <person name="Baxendale J."/>
            <person name="Bayraktaroglu L."/>
            <person name="Beasley E.M."/>
            <person name="Beeson K.Y."/>
            <person name="Benos P.V."/>
            <person name="Berman B.P."/>
            <person name="Bhandari D."/>
            <person name="Bolshakov S."/>
            <person name="Borkova D."/>
            <person name="Botchan M.R."/>
            <person name="Bouck J."/>
            <person name="Brokstein P."/>
            <person name="Brottier P."/>
            <person name="Burtis K.C."/>
            <person name="Busam D.A."/>
            <person name="Butler H."/>
            <person name="Cadieu E."/>
            <person name="Center A."/>
            <person name="Chandra I."/>
            <person name="Cherry J.M."/>
            <person name="Cawley S."/>
            <person name="Dahlke C."/>
            <person name="Davenport L.B."/>
            <person name="Davies P."/>
            <person name="de Pablos B."/>
            <person name="Delcher A."/>
            <person name="Deng Z."/>
            <person name="Mays A.D."/>
            <person name="Dew I."/>
            <person name="Dietz S.M."/>
            <person name="Dodson K."/>
            <person name="Doup L.E."/>
            <person name="Downes M."/>
            <person name="Dugan-Rocha S."/>
            <person name="Dunkov B.C."/>
            <person name="Dunn P."/>
            <person name="Durbin K.J."/>
            <person name="Evangelista C.C."/>
            <person name="Ferraz C."/>
            <person name="Ferriera S."/>
            <person name="Fleischmann W."/>
            <person name="Fosler C."/>
            <person name="Gabrielian A.E."/>
            <person name="Garg N.S."/>
            <person name="Gelbart W.M."/>
            <person name="Glasser K."/>
            <person name="Glodek A."/>
            <person name="Gong F."/>
            <person name="Gorrell J.H."/>
            <person name="Gu Z."/>
            <person name="Guan P."/>
            <person name="Harris M."/>
            <person name="Harris N.L."/>
            <person name="Harvey D.A."/>
            <person name="Heiman T.J."/>
            <person name="Hernandez J.R."/>
            <person name="Houck J."/>
            <person name="Hostin D."/>
            <person name="Houston K.A."/>
            <person name="Howland T.J."/>
            <person name="Wei M.-H."/>
            <person name="Ibegwam C."/>
            <person name="Jalali M."/>
            <person name="Kalush F."/>
            <person name="Karpen G.H."/>
            <person name="Ke Z."/>
            <person name="Kennison J.A."/>
            <person name="Ketchum K.A."/>
            <person name="Kimmel B.E."/>
            <person name="Kodira C.D."/>
            <person name="Kraft C.L."/>
            <person name="Kravitz S."/>
            <person name="Kulp D."/>
            <person name="Lai Z."/>
            <person name="Lasko P."/>
            <person name="Lei Y."/>
            <person name="Levitsky A.A."/>
            <person name="Li J.H."/>
            <person name="Li Z."/>
            <person name="Liang Y."/>
            <person name="Lin X."/>
            <person name="Liu X."/>
            <person name="Mattei B."/>
            <person name="McIntosh T.C."/>
            <person name="McLeod M.P."/>
            <person name="McPherson D."/>
            <person name="Merkulov G."/>
            <person name="Milshina N.V."/>
            <person name="Mobarry C."/>
            <person name="Morris J."/>
            <person name="Moshrefi A."/>
            <person name="Mount S.M."/>
            <person name="Moy M."/>
            <person name="Murphy B."/>
            <person name="Murphy L."/>
            <person name="Muzny D.M."/>
            <person name="Nelson D.L."/>
            <person name="Nelson D.R."/>
            <person name="Nelson K.A."/>
            <person name="Nixon K."/>
            <person name="Nusskern D.R."/>
            <person name="Pacleb J.M."/>
            <person name="Palazzolo M."/>
            <person name="Pittman G.S."/>
            <person name="Pan S."/>
            <person name="Pollard J."/>
            <person name="Puri V."/>
            <person name="Reese M.G."/>
            <person name="Reinert K."/>
            <person name="Remington K."/>
            <person name="Saunders R.D.C."/>
            <person name="Scheeler F."/>
            <person name="Shen H."/>
            <person name="Shue B.C."/>
            <person name="Siden-Kiamos I."/>
            <person name="Simpson M."/>
            <person name="Skupski M.P."/>
            <person name="Smith T.J."/>
            <person name="Spier E."/>
            <person name="Spradling A.C."/>
            <person name="Stapleton M."/>
            <person name="Strong R."/>
            <person name="Sun E."/>
            <person name="Svirskas R."/>
            <person name="Tector C."/>
            <person name="Turner R."/>
            <person name="Venter E."/>
            <person name="Wang A.H."/>
            <person name="Wang X."/>
            <person name="Wang Z.-Y."/>
            <person name="Wassarman D.A."/>
            <person name="Weinstock G.M."/>
            <person name="Weissenbach J."/>
            <person name="Williams S.M."/>
            <person name="Woodage T."/>
            <person name="Worley K.C."/>
            <person name="Wu D."/>
            <person name="Yang S."/>
            <person name="Yao Q.A."/>
            <person name="Ye J."/>
            <person name="Yeh R.-F."/>
            <person name="Zaveri J.S."/>
            <person name="Zhan M."/>
            <person name="Zhang G."/>
            <person name="Zhao Q."/>
            <person name="Zheng L."/>
            <person name="Zheng X.H."/>
            <person name="Zhong F.N."/>
            <person name="Zhong W."/>
            <person name="Zhou X."/>
            <person name="Zhu S.C."/>
            <person name="Zhu X."/>
            <person name="Smith H.O."/>
            <person name="Gibbs R.A."/>
            <person name="Myers E.W."/>
            <person name="Rubin G.M."/>
            <person name="Venter J.C."/>
        </authorList>
    </citation>
    <scope>NUCLEOTIDE SEQUENCE [LARGE SCALE GENOMIC DNA]</scope>
    <source>
        <strain evidence="14">Berkeley</strain>
    </source>
</reference>
<reference evidence="14" key="2">
    <citation type="journal article" date="2002" name="Genome Biol.">
        <title>Annotation of the Drosophila melanogaster euchromatic genome: a systematic review.</title>
        <authorList>
            <person name="Misra S."/>
            <person name="Crosby M.A."/>
            <person name="Mungall C.J."/>
            <person name="Matthews B.B."/>
            <person name="Campbell K.S."/>
            <person name="Hradecky P."/>
            <person name="Huang Y."/>
            <person name="Kaminker J.S."/>
            <person name="Millburn G.H."/>
            <person name="Prochnik S.E."/>
            <person name="Smith C.D."/>
            <person name="Tupy J.L."/>
            <person name="Whitfield E.J."/>
            <person name="Bayraktaroglu L."/>
            <person name="Berman B.P."/>
            <person name="Bettencourt B.R."/>
            <person name="Celniker S.E."/>
            <person name="de Grey A.D.N.J."/>
            <person name="Drysdale R.A."/>
            <person name="Harris N.L."/>
            <person name="Richter J."/>
            <person name="Russo S."/>
            <person name="Schroeder A.J."/>
            <person name="Shu S.Q."/>
            <person name="Stapleton M."/>
            <person name="Yamada C."/>
            <person name="Ashburner M."/>
            <person name="Gelbart W.M."/>
            <person name="Rubin G.M."/>
            <person name="Lewis S.E."/>
        </authorList>
    </citation>
    <scope>GENOME REANNOTATION</scope>
    <source>
        <strain evidence="14">Berkeley</strain>
    </source>
</reference>
<reference evidence="12" key="3">
    <citation type="journal article" date="2002" name="Genome Biol.">
        <title>A Drosophila full-length cDNA resource.</title>
        <authorList>
            <person name="Stapleton M."/>
            <person name="Carlson J.W."/>
            <person name="Brokstein P."/>
            <person name="Yu C."/>
            <person name="Champe M."/>
            <person name="George R.A."/>
            <person name="Guarin H."/>
            <person name="Kronmiller B."/>
            <person name="Pacleb J.M."/>
            <person name="Park S."/>
            <person name="Wan K.H."/>
            <person name="Rubin G.M."/>
            <person name="Celniker S.E."/>
        </authorList>
    </citation>
    <scope>NUCLEOTIDE SEQUENCE [LARGE SCALE MRNA]</scope>
    <source>
        <strain evidence="12">Berkeley</strain>
        <tissue evidence="12">Embryo</tissue>
    </source>
</reference>
<reference evidence="11" key="4">
    <citation type="journal article" date="2006" name="Development">
        <title>spn-F encodes a novel protein that affects oocyte patterning and bristle morphology in Drosophila.</title>
        <authorList>
            <person name="Abdu U."/>
            <person name="Bar D."/>
            <person name="Schuepbach T."/>
        </authorList>
    </citation>
    <scope>FUNCTION</scope>
    <scope>INTERACTION WITH CTP</scope>
    <scope>SUBCELLULAR LOCATION</scope>
    <scope>DISRUPTION PHENOTYPE</scope>
</reference>
<reference evidence="11" key="5">
    <citation type="journal article" date="2008" name="BMC Cell Biol.">
        <title>The Drosophila IKK-related kinase (Ik2) and Spindle-F proteins are part of a complex that regulates cytoskeleton organization during oogenesis.</title>
        <authorList>
            <person name="Dubin-Bar D."/>
            <person name="Bitan A."/>
            <person name="Bakhrat A."/>
            <person name="Kaiden-Hasson R."/>
            <person name="Etzion S."/>
            <person name="Shaanan B."/>
            <person name="Abdu U."/>
        </authorList>
    </citation>
    <scope>INTERACTION WITH IKKEPSILON</scope>
    <scope>SUBCELLULAR LOCATION</scope>
    <scope>PHOSPHORYLATION</scope>
</reference>
<reference evidence="11" key="6">
    <citation type="journal article" date="2010" name="Mol. Cell. Biol.">
        <title>Asymmetric microtubule function is an essential requirement for polarized organization of the Drosophila bristle.</title>
        <authorList>
            <person name="Bitan A."/>
            <person name="Guild G.M."/>
            <person name="Bar-Dubin D."/>
            <person name="Abdu U."/>
        </authorList>
    </citation>
    <scope>FUNCTION</scope>
    <scope>TISSUE SPECIFICITY</scope>
    <scope>DISRUPTION PHENOTYPE</scope>
</reference>
<reference evidence="11" key="7">
    <citation type="journal article" date="2013" name="Mol. Cell. Biol.">
        <title>Drosophila oocyte polarity and cytoskeleton organization require regulation of Ik2 activity by Spn-F and Javelin-like.</title>
        <authorList>
            <person name="Amsalem S."/>
            <person name="Bakrhat A."/>
            <person name="Otani T."/>
            <person name="Hayashi S."/>
            <person name="Goldstein B."/>
            <person name="Abdu U."/>
        </authorList>
    </citation>
    <scope>FUNCTION</scope>
    <scope>INTERACTION WITH JVL</scope>
</reference>
<reference evidence="11" key="8">
    <citation type="journal article" date="2015" name="Development">
        <title>A transport and retention mechanism for the sustained distal localization of Spn-F-IKKepsilon during Drosophila bristle elongation.</title>
        <authorList>
            <person name="Otani T."/>
            <person name="Oshima K."/>
            <person name="Kimpara A."/>
            <person name="Takeda M."/>
            <person name="Abdu U."/>
            <person name="Hayashi S."/>
        </authorList>
    </citation>
    <scope>FUNCTION</scope>
    <scope>IDENTIFICATION IN COMPLEX WITH CTP AND IKKEPSILON</scope>
    <scope>TISSUE SPECIFICITY</scope>
    <scope>DISRUPTION PHENOTYPE</scope>
</reference>
<reference key="9">
    <citation type="journal article" date="2015" name="Development">
        <authorList>
            <person name="Otani T."/>
            <person name="Oshima K."/>
            <person name="Kimpara A."/>
            <person name="Takeda M."/>
            <person name="Abdu U."/>
            <person name="Hayashi S."/>
        </authorList>
    </citation>
    <scope>ERRATUM OF PUBMED:26092846</scope>
</reference>
<reference evidence="11" key="10">
    <citation type="journal article" date="2015" name="PLoS Genet.">
        <title>Spindle-F is the central mediator of Ik2 kinase-dependent dendrite pruning in Drosophila sensory neurons.</title>
        <authorList>
            <person name="Lin T."/>
            <person name="Pan P.Y."/>
            <person name="Lai Y.T."/>
            <person name="Chiang K.W."/>
            <person name="Hsieh H.L."/>
            <person name="Wu Y.P."/>
            <person name="Ke J.M."/>
            <person name="Lee M.C."/>
            <person name="Liao S.S."/>
            <person name="Shih H.T."/>
            <person name="Tang C.Y."/>
            <person name="Yang S.B."/>
            <person name="Cheng H.C."/>
            <person name="Wu J.T."/>
            <person name="Jan Y.N."/>
            <person name="Lee H.H."/>
        </authorList>
    </citation>
    <scope>FUNCTION</scope>
    <scope>SUBUNIT</scope>
    <scope>IDENTIFICATION IN COMPLEX WITH CTP AND IKKEPSILON</scope>
    <scope>SUBCELLULAR LOCATION</scope>
    <scope>DISRUPTION PHENOTYPE</scope>
    <scope>PHOSPHORYLATION AT SER-53; SER-85; SER-172; SER-202; SER-264; SER-270; SER-325 AND SER-349</scope>
    <scope>MUTAGENESIS OF SER-53; SER-85; SER-172; SER-202; SER-264; SER-270; SER-325 AND SER-349</scope>
</reference>
<sequence length="364" mass="40907">MEASAAKITPMASSMSASGSTNSPSSEKMNYALQVALQTIKERCIQLQRRVASMEEENQQLREASSRSEGAPRANEIGVTGDVLSLKAQVSELQRQKEQLEEHIGMVSNENRRLWSRLSQISKDQQLNALPSSTDSRAQQNQNLVRSKTFTQHSPNPHLRQKMLSDGIKDLSLEEIALDDFGASSEELGYPYNLQKVEETTSEPDANVDAKRCLDGLQELRREAMKQQQELRSVMTLLENRIALKPCPECAQKTIKKPEMADKSLETDDSLTSELKNYESQHNGHNGTPPSQRINIIQEKIKADAADAMEKTCPMCGKQYSSQVSFNAFREHVEMHFIDDALELESENSIERQFEFVSHAVGDF</sequence>
<organism evidence="14">
    <name type="scientific">Drosophila melanogaster</name>
    <name type="common">Fruit fly</name>
    <dbReference type="NCBI Taxonomy" id="7227"/>
    <lineage>
        <taxon>Eukaryota</taxon>
        <taxon>Metazoa</taxon>
        <taxon>Ecdysozoa</taxon>
        <taxon>Arthropoda</taxon>
        <taxon>Hexapoda</taxon>
        <taxon>Insecta</taxon>
        <taxon>Pterygota</taxon>
        <taxon>Neoptera</taxon>
        <taxon>Endopterygota</taxon>
        <taxon>Diptera</taxon>
        <taxon>Brachycera</taxon>
        <taxon>Muscomorpha</taxon>
        <taxon>Ephydroidea</taxon>
        <taxon>Drosophilidae</taxon>
        <taxon>Drosophila</taxon>
        <taxon>Sophophora</taxon>
    </lineage>
</organism>
<evidence type="ECO:0000255" key="1"/>
<evidence type="ECO:0000255" key="2">
    <source>
        <dbReference type="PROSITE-ProRule" id="PRU01253"/>
    </source>
</evidence>
<evidence type="ECO:0000256" key="3">
    <source>
        <dbReference type="SAM" id="MobiDB-lite"/>
    </source>
</evidence>
<evidence type="ECO:0000269" key="4">
    <source>
    </source>
</evidence>
<evidence type="ECO:0000269" key="5">
    <source>
    </source>
</evidence>
<evidence type="ECO:0000269" key="6">
    <source>
    </source>
</evidence>
<evidence type="ECO:0000269" key="7">
    <source>
    </source>
</evidence>
<evidence type="ECO:0000269" key="8">
    <source>
    </source>
</evidence>
<evidence type="ECO:0000269" key="9">
    <source>
    </source>
</evidence>
<evidence type="ECO:0000303" key="10">
    <source>
    </source>
</evidence>
<evidence type="ECO:0000305" key="11"/>
<evidence type="ECO:0000312" key="12">
    <source>
        <dbReference type="EMBL" id="AAL28594.1"/>
    </source>
</evidence>
<evidence type="ECO:0000312" key="13">
    <source>
        <dbReference type="FlyBase" id="FBgn0086362"/>
    </source>
</evidence>
<evidence type="ECO:0000312" key="14">
    <source>
        <dbReference type="Proteomes" id="UP000000803"/>
    </source>
</evidence>
<accession>Q9V9Y9</accession>
<gene>
    <name evidence="13" type="primary">spn-F</name>
    <name evidence="13" type="ORF">CG12114</name>
</gene>
<name>SPNF_DROME</name>
<proteinExistence type="evidence at protein level"/>
<comment type="function">
    <text evidence="4 6 7 8 9">Plays a role in oocyte axis determination and microtubule organization during oogenesis (PubMed:16540510, PubMed:24019068). Also required for polarized organization of the bristle (PubMed:19917727). Required, with jvl, for activation of the kinase IKKepsilon in the germ line (PubMed:24019068). Also required for localization of IKKepsilon to the distal tip of elongating bristles by acting as an adapter linking IKKepsilon and cytoplasmic dynein (PubMed:26092846). Involved in dendrite pruning in larval sensory neurons during metamorphosis (PubMed:26540204).</text>
</comment>
<comment type="subunit">
    <text evidence="4 5 7 8 9">Forms homooligomers (PubMed:26540204). Interacts with the dynein light chain ctp (PubMed:16540510). Interacts (via C-terminus) with IKKepsilon; this leads to phosphorylation of spn-F (PubMed:18796167, PubMed:26092846). Forms ternary complexes with ctp and IKKepsilon; this is required for spn-F redistribution from puncta in larval neurons and for dendrite pruning (PubMed:26092846, PubMed:26540204). Interacts with ctp and IKKepsilon through distinct regions (PubMed:26092846). Interacts (via C-terminus) with jvl (PubMed:24019068).</text>
</comment>
<comment type="interaction">
    <interactant intactId="EBI-112013">
        <id>Q9V9Y9</id>
    </interactant>
    <interactant intactId="EBI-139574">
        <id>Q9V3Y8</id>
        <label>IKKepsilon</label>
    </interactant>
    <organismsDiffer>false</organismsDiffer>
    <experiments>3</experiments>
</comment>
<comment type="interaction">
    <interactant intactId="EBI-112013">
        <id>Q9V9Y9</id>
    </interactant>
    <interactant intactId="EBI-192116">
        <id>Q9VFG3</id>
        <label>jvl</label>
    </interactant>
    <organismsDiffer>false</organismsDiffer>
    <experiments>4</experiments>
</comment>
<comment type="subcellular location">
    <subcellularLocation>
        <location evidence="4">Cytoplasm</location>
        <location evidence="4">Cytoskeleton</location>
    </subcellularLocation>
    <subcellularLocation>
        <location evidence="5">Cytoplasm</location>
    </subcellularLocation>
    <subcellularLocation>
        <location evidence="9">Cell projection</location>
        <location evidence="9">Axon</location>
    </subcellularLocation>
    <subcellularLocation>
        <location evidence="9">Cell projection</location>
        <location evidence="9">Dendrite</location>
    </subcellularLocation>
    <subcellularLocation>
        <location evidence="9">Perikaryon</location>
    </subcellularLocation>
    <text evidence="4 5 9">Localizes to the minus ends of microtubules in oocytes (PubMed:16540510). Found in a punctate pattern colocalized with IKKepsilon in nurse cells (PubMed:16540510, PubMed:18796167). Displays a punctate pattern in the soma, dendrites and axons of larval C4da neurons but becomes dispersed in pupal neurons which is necessary for dendrite pruning (PubMed:26540204).</text>
</comment>
<comment type="tissue specificity">
    <text evidence="6 8">In pupal bristles, localizes to the bristle tip throughout the elongation period (at protein level).</text>
</comment>
<comment type="PTM">
    <text evidence="5 9">Phosphorylated by IKKepsilon (PubMed:18796167, PubMed:26540204). Phosphorylation is required for spn-F neuronal distribution and dendrite pruning and reduces spn-F homooligomerization (PubMed:26540204). It does not lead to spn-F degradation (PubMed:18796167).</text>
</comment>
<comment type="disruption phenotype">
    <text evidence="4 6 8 9">Mutant females produce a ventralized eggshell. A fraction of eggs are fertilized and the resulting embryos have a variety of pattern abnormalities. In mutant ovaries, grk RNA is mislocalized during mid-oogenesis and grk protein levels are reduced. Defects in microtubule organization around the oocyte nucleus (PubMed:16540510). Bristles are considerably shorter and thicker than normal and have an altered morphology and growth direction (PubMed:16540510, PubMed:19917727, PubMed:26092846). Actin bundles are poorly oriented in mutant bristles (PubMed:19917727). Defective dendrite pruning in C4da sensory neurons with primary dendrites remaining connected to the cell body in contrast to wild-type neurons where dendrites are pruned by 18 hours after puparium formation (PubMed:26540204).</text>
</comment>
<protein>
    <recommendedName>
        <fullName evidence="10">Protein spindle-F</fullName>
    </recommendedName>
</protein>
<keyword id="KW-0966">Cell projection</keyword>
<keyword id="KW-0175">Coiled coil</keyword>
<keyword id="KW-0963">Cytoplasm</keyword>
<keyword id="KW-0206">Cytoskeleton</keyword>
<keyword id="KW-0221">Differentiation</keyword>
<keyword id="KW-0479">Metal-binding</keyword>
<keyword id="KW-0524">Neurogenesis</keyword>
<keyword id="KW-0896">Oogenesis</keyword>
<keyword id="KW-0597">Phosphoprotein</keyword>
<keyword id="KW-1185">Reference proteome</keyword>
<keyword id="KW-0862">Zinc</keyword>
<keyword id="KW-0863">Zinc-finger</keyword>
<dbReference type="EMBL" id="AE014297">
    <property type="protein sequence ID" value="AAF57139.1"/>
    <property type="molecule type" value="Genomic_DNA"/>
</dbReference>
<dbReference type="EMBL" id="AY061046">
    <property type="protein sequence ID" value="AAL28594.1"/>
    <property type="molecule type" value="mRNA"/>
</dbReference>
<dbReference type="RefSeq" id="NP_651858.1">
    <property type="nucleotide sequence ID" value="NM_143601.3"/>
</dbReference>
<dbReference type="SMR" id="Q9V9Y9"/>
<dbReference type="FunCoup" id="Q9V9Y9">
    <property type="interactions" value="102"/>
</dbReference>
<dbReference type="IntAct" id="Q9V9Y9">
    <property type="interactions" value="11"/>
</dbReference>
<dbReference type="STRING" id="7227.FBpp0303112"/>
<dbReference type="iPTMnet" id="Q9V9Y9"/>
<dbReference type="PaxDb" id="7227-FBpp0085122"/>
<dbReference type="DNASU" id="43700"/>
<dbReference type="EnsemblMetazoa" id="FBtr0085760">
    <property type="protein sequence ID" value="FBpp0085122"/>
    <property type="gene ID" value="FBgn0086362"/>
</dbReference>
<dbReference type="GeneID" id="43700"/>
<dbReference type="KEGG" id="dme:Dmel_CG12114"/>
<dbReference type="UCSC" id="CG12114-RA">
    <property type="organism name" value="d. melanogaster"/>
</dbReference>
<dbReference type="AGR" id="FB:FBgn0086362"/>
<dbReference type="CTD" id="43700"/>
<dbReference type="FlyBase" id="FBgn0086362">
    <property type="gene designation" value="spn-F"/>
</dbReference>
<dbReference type="VEuPathDB" id="VectorBase:FBgn0086362"/>
<dbReference type="eggNOG" id="ENOG502S41T">
    <property type="taxonomic scope" value="Eukaryota"/>
</dbReference>
<dbReference type="HOGENOM" id="CLU_728759_0_0_1"/>
<dbReference type="InParanoid" id="Q9V9Y9"/>
<dbReference type="OMA" id="MRREAMK"/>
<dbReference type="OrthoDB" id="6105729at2759"/>
<dbReference type="PhylomeDB" id="Q9V9Y9"/>
<dbReference type="SignaLink" id="Q9V9Y9"/>
<dbReference type="BioGRID-ORCS" id="43700">
    <property type="hits" value="0 hits in 1 CRISPR screen"/>
</dbReference>
<dbReference type="GenomeRNAi" id="43700"/>
<dbReference type="PRO" id="PR:Q9V9Y9"/>
<dbReference type="Proteomes" id="UP000000803">
    <property type="component" value="Chromosome 3R"/>
</dbReference>
<dbReference type="Bgee" id="FBgn0086362">
    <property type="expression patterns" value="Expressed in secondary oocyte and 95 other cell types or tissues"/>
</dbReference>
<dbReference type="ExpressionAtlas" id="Q9V9Y9">
    <property type="expression patterns" value="baseline and differential"/>
</dbReference>
<dbReference type="GO" id="GO:0030424">
    <property type="term" value="C:axon"/>
    <property type="evidence" value="ECO:0007669"/>
    <property type="project" value="UniProtKB-SubCell"/>
</dbReference>
<dbReference type="GO" id="GO:0005737">
    <property type="term" value="C:cytoplasm"/>
    <property type="evidence" value="ECO:0000314"/>
    <property type="project" value="UniProtKB"/>
</dbReference>
<dbReference type="GO" id="GO:0005856">
    <property type="term" value="C:cytoskeleton"/>
    <property type="evidence" value="ECO:0007669"/>
    <property type="project" value="UniProtKB-SubCell"/>
</dbReference>
<dbReference type="GO" id="GO:0030425">
    <property type="term" value="C:dendrite"/>
    <property type="evidence" value="ECO:0007669"/>
    <property type="project" value="UniProtKB-SubCell"/>
</dbReference>
<dbReference type="GO" id="GO:0005794">
    <property type="term" value="C:Golgi apparatus"/>
    <property type="evidence" value="ECO:0000314"/>
    <property type="project" value="FlyBase"/>
</dbReference>
<dbReference type="GO" id="GO:0043204">
    <property type="term" value="C:perikaryon"/>
    <property type="evidence" value="ECO:0007669"/>
    <property type="project" value="UniProtKB-SubCell"/>
</dbReference>
<dbReference type="GO" id="GO:0008270">
    <property type="term" value="F:zinc ion binding"/>
    <property type="evidence" value="ECO:0007669"/>
    <property type="project" value="UniProtKB-KW"/>
</dbReference>
<dbReference type="GO" id="GO:0008407">
    <property type="term" value="P:chaeta morphogenesis"/>
    <property type="evidence" value="ECO:0000315"/>
    <property type="project" value="FlyBase"/>
</dbReference>
<dbReference type="GO" id="GO:0007399">
    <property type="term" value="P:nervous system development"/>
    <property type="evidence" value="ECO:0007669"/>
    <property type="project" value="UniProtKB-KW"/>
</dbReference>
<dbReference type="GO" id="GO:0007314">
    <property type="term" value="P:oocyte anterior/posterior axis specification"/>
    <property type="evidence" value="ECO:0000315"/>
    <property type="project" value="FlyBase"/>
</dbReference>
<dbReference type="GO" id="GO:0007309">
    <property type="term" value="P:oocyte axis specification"/>
    <property type="evidence" value="ECO:0000315"/>
    <property type="project" value="FlyBase"/>
</dbReference>
<dbReference type="GO" id="GO:0016325">
    <property type="term" value="P:oocyte microtubule cytoskeleton organization"/>
    <property type="evidence" value="ECO:0000314"/>
    <property type="project" value="FlyBase"/>
</dbReference>
<dbReference type="GO" id="GO:0008103">
    <property type="term" value="P:oocyte microtubule cytoskeleton polarization"/>
    <property type="evidence" value="ECO:0000315"/>
    <property type="project" value="FlyBase"/>
</dbReference>
<dbReference type="GO" id="GO:1904801">
    <property type="term" value="P:positive regulation of neuron remodeling"/>
    <property type="evidence" value="ECO:0000315"/>
    <property type="project" value="FlyBase"/>
</dbReference>
<dbReference type="GO" id="GO:0008104">
    <property type="term" value="P:protein localization"/>
    <property type="evidence" value="ECO:0000315"/>
    <property type="project" value="UniProtKB"/>
</dbReference>
<dbReference type="GO" id="GO:0007317">
    <property type="term" value="P:regulation of pole plasm oskar mRNA localization"/>
    <property type="evidence" value="ECO:0000315"/>
    <property type="project" value="FlyBase"/>
</dbReference>
<dbReference type="CDD" id="cd21971">
    <property type="entry name" value="Zn-C2H2_spn-F"/>
    <property type="match status" value="1"/>
</dbReference>
<dbReference type="Gene3D" id="6.20.250.40">
    <property type="match status" value="1"/>
</dbReference>
<dbReference type="InterPro" id="IPR041641">
    <property type="entry name" value="CALCOCO1/2_Zn_UBZ1"/>
</dbReference>
<dbReference type="Pfam" id="PF18112">
    <property type="entry name" value="Zn-C2H2_12"/>
    <property type="match status" value="1"/>
</dbReference>
<dbReference type="PROSITE" id="PS51905">
    <property type="entry name" value="ZF_UBZ1"/>
    <property type="match status" value="1"/>
</dbReference>
<feature type="chain" id="PRO_0000437139" description="Protein spindle-F">
    <location>
        <begin position="1"/>
        <end position="364"/>
    </location>
</feature>
<feature type="zinc finger region" description="UBZ1-type" evidence="2">
    <location>
        <begin position="310"/>
        <end position="336"/>
    </location>
</feature>
<feature type="region of interest" description="Disordered" evidence="3">
    <location>
        <begin position="1"/>
        <end position="26"/>
    </location>
</feature>
<feature type="region of interest" description="Disordered" evidence="3">
    <location>
        <begin position="56"/>
        <end position="75"/>
    </location>
</feature>
<feature type="coiled-coil region" evidence="1">
    <location>
        <begin position="32"/>
        <end position="114"/>
    </location>
</feature>
<feature type="coiled-coil region" evidence="1">
    <location>
        <begin position="210"/>
        <end position="243"/>
    </location>
</feature>
<feature type="compositionally biased region" description="Low complexity" evidence="3">
    <location>
        <begin position="9"/>
        <end position="26"/>
    </location>
</feature>
<feature type="binding site" evidence="2">
    <location>
        <position position="313"/>
    </location>
    <ligand>
        <name>Zn(2+)</name>
        <dbReference type="ChEBI" id="CHEBI:29105"/>
    </ligand>
</feature>
<feature type="binding site" evidence="2">
    <location>
        <position position="316"/>
    </location>
    <ligand>
        <name>Zn(2+)</name>
        <dbReference type="ChEBI" id="CHEBI:29105"/>
    </ligand>
</feature>
<feature type="binding site" evidence="2">
    <location>
        <position position="332"/>
    </location>
    <ligand>
        <name>Zn(2+)</name>
        <dbReference type="ChEBI" id="CHEBI:29105"/>
    </ligand>
</feature>
<feature type="binding site" evidence="2">
    <location>
        <position position="336"/>
    </location>
    <ligand>
        <name>Zn(2+)</name>
        <dbReference type="ChEBI" id="CHEBI:29105"/>
    </ligand>
</feature>
<feature type="modified residue" description="Phosphoserine" evidence="9">
    <location>
        <position position="53"/>
    </location>
</feature>
<feature type="modified residue" description="Phosphoserine" evidence="9">
    <location>
        <position position="85"/>
    </location>
</feature>
<feature type="modified residue" description="Phosphoserine" evidence="9">
    <location>
        <position position="172"/>
    </location>
</feature>
<feature type="modified residue" description="Phosphoserine" evidence="9">
    <location>
        <position position="202"/>
    </location>
</feature>
<feature type="modified residue" description="Phosphoserine" evidence="9">
    <location>
        <position position="264"/>
    </location>
</feature>
<feature type="modified residue" description="Phosphoserine" evidence="9">
    <location>
        <position position="270"/>
    </location>
</feature>
<feature type="modified residue" description="Phosphoserine" evidence="9">
    <location>
        <position position="325"/>
    </location>
</feature>
<feature type="modified residue" description="Phosphoserine" evidence="9">
    <location>
        <position position="349"/>
    </location>
</feature>
<feature type="mutagenesis site" description="Abolishes phosphorylation but does not affect interaction with IKKepsilon; when associated with A-85; A-172; A-202; A-264; A-270; A-325 and A-349." evidence="9">
    <original>S</original>
    <variation>A</variation>
    <location>
        <position position="53"/>
    </location>
</feature>
<feature type="mutagenesis site" description="Abolishes phosphorylation but does not affect interaction with IKKepsilon; when associated with A-53; A-172; A-202; A-264; A-270; A-325 and A-349." evidence="9">
    <original>S</original>
    <variation>A</variation>
    <location>
        <position position="85"/>
    </location>
</feature>
<feature type="mutagenesis site" description="Abolishes phosphorylation but does not affect interaction with IKKepsilon; when associated with A-53; A-85; A-202; A-264; A-270; A-325 and A-349." evidence="9">
    <original>S</original>
    <variation>A</variation>
    <location>
        <position position="172"/>
    </location>
</feature>
<feature type="mutagenesis site" description="Abolishes phosphorylation but does not affect interaction with IKKepsilon; when associated with A-53; A-85; A-172; A-264; A-270; A-325 and A-349." evidence="9">
    <original>S</original>
    <variation>A</variation>
    <location>
        <position position="202"/>
    </location>
</feature>
<feature type="mutagenesis site" description="Abolishes phosphorylation but does not affect interaction with IKKepsilon; when associated with A-53; A-85; A-172; A-202; A-270; A-325 and A-349." evidence="9">
    <original>S</original>
    <variation>A</variation>
    <location>
        <position position="264"/>
    </location>
</feature>
<feature type="mutagenesis site" description="Abolishes phosphorylation but does not affect interaction with IKKepsilon; when associated with A-53; A-85; A-172; A-202; A-264; A-325 and A-349." evidence="9">
    <original>S</original>
    <variation>A</variation>
    <location>
        <position position="270"/>
    </location>
</feature>
<feature type="mutagenesis site" description="Abolishes phosphorylation but does not affect interaction with IKKepsilon; when associated with A-53; A-85; A-172; A-202; A-264; A-270 and A-349." evidence="9">
    <original>S</original>
    <variation>A</variation>
    <location>
        <position position="325"/>
    </location>
</feature>
<feature type="mutagenesis site" description="Abolishes phosphorylation but does not affect interaction with IKKepsilon; when associated with A-53; A-85; A-172; A-202; A-264; A-270 and A-325." evidence="9">
    <original>S</original>
    <variation>A</variation>
    <location>
        <position position="349"/>
    </location>
</feature>